<proteinExistence type="inferred from homology"/>
<accession>C0Q644</accession>
<evidence type="ECO:0000255" key="1">
    <source>
        <dbReference type="HAMAP-Rule" id="MF_00382"/>
    </source>
</evidence>
<evidence type="ECO:0000305" key="2"/>
<protein>
    <recommendedName>
        <fullName evidence="1">Large ribosomal subunit protein bL20</fullName>
    </recommendedName>
    <alternativeName>
        <fullName evidence="2">50S ribosomal protein L20</fullName>
    </alternativeName>
</protein>
<comment type="function">
    <text evidence="1">Binds directly to 23S ribosomal RNA and is necessary for the in vitro assembly process of the 50S ribosomal subunit. It is not involved in the protein synthesizing functions of that subunit.</text>
</comment>
<comment type="similarity">
    <text evidence="1">Belongs to the bacterial ribosomal protein bL20 family.</text>
</comment>
<reference key="1">
    <citation type="journal article" date="2009" name="PLoS ONE">
        <title>Salmonella paratyphi C: genetic divergence from Salmonella choleraesuis and pathogenic convergence with Salmonella typhi.</title>
        <authorList>
            <person name="Liu W.-Q."/>
            <person name="Feng Y."/>
            <person name="Wang Y."/>
            <person name="Zou Q.-H."/>
            <person name="Chen F."/>
            <person name="Guo J.-T."/>
            <person name="Peng Y.-H."/>
            <person name="Jin Y."/>
            <person name="Li Y.-G."/>
            <person name="Hu S.-N."/>
            <person name="Johnston R.N."/>
            <person name="Liu G.-R."/>
            <person name="Liu S.-L."/>
        </authorList>
    </citation>
    <scope>NUCLEOTIDE SEQUENCE [LARGE SCALE GENOMIC DNA]</scope>
    <source>
        <strain>RKS4594</strain>
    </source>
</reference>
<sequence length="118" mass="13497">MARVKRGVIARARHKKILKQAKGYYGARSRVYRVAFQAVIKAGQYAYRDRRQRKRQFRQLWIARINAAARQNGISYSKFINGLKKASVEIDRKILADIAVFDKVAFTALVEKAKAALA</sequence>
<keyword id="KW-0687">Ribonucleoprotein</keyword>
<keyword id="KW-0689">Ribosomal protein</keyword>
<keyword id="KW-0694">RNA-binding</keyword>
<keyword id="KW-0699">rRNA-binding</keyword>
<organism>
    <name type="scientific">Salmonella paratyphi C (strain RKS4594)</name>
    <dbReference type="NCBI Taxonomy" id="476213"/>
    <lineage>
        <taxon>Bacteria</taxon>
        <taxon>Pseudomonadati</taxon>
        <taxon>Pseudomonadota</taxon>
        <taxon>Gammaproteobacteria</taxon>
        <taxon>Enterobacterales</taxon>
        <taxon>Enterobacteriaceae</taxon>
        <taxon>Salmonella</taxon>
    </lineage>
</organism>
<dbReference type="EMBL" id="CP000857">
    <property type="protein sequence ID" value="ACN46510.1"/>
    <property type="molecule type" value="Genomic_DNA"/>
</dbReference>
<dbReference type="RefSeq" id="WP_000124850.1">
    <property type="nucleotide sequence ID" value="NC_012125.1"/>
</dbReference>
<dbReference type="SMR" id="C0Q644"/>
<dbReference type="GeneID" id="98388757"/>
<dbReference type="KEGG" id="sei:SPC_2396"/>
<dbReference type="HOGENOM" id="CLU_123265_0_1_6"/>
<dbReference type="Proteomes" id="UP000001599">
    <property type="component" value="Chromosome"/>
</dbReference>
<dbReference type="GO" id="GO:1990904">
    <property type="term" value="C:ribonucleoprotein complex"/>
    <property type="evidence" value="ECO:0007669"/>
    <property type="project" value="UniProtKB-KW"/>
</dbReference>
<dbReference type="GO" id="GO:0005840">
    <property type="term" value="C:ribosome"/>
    <property type="evidence" value="ECO:0007669"/>
    <property type="project" value="UniProtKB-KW"/>
</dbReference>
<dbReference type="GO" id="GO:0019843">
    <property type="term" value="F:rRNA binding"/>
    <property type="evidence" value="ECO:0007669"/>
    <property type="project" value="UniProtKB-UniRule"/>
</dbReference>
<dbReference type="GO" id="GO:0003735">
    <property type="term" value="F:structural constituent of ribosome"/>
    <property type="evidence" value="ECO:0007669"/>
    <property type="project" value="InterPro"/>
</dbReference>
<dbReference type="GO" id="GO:0000027">
    <property type="term" value="P:ribosomal large subunit assembly"/>
    <property type="evidence" value="ECO:0007669"/>
    <property type="project" value="UniProtKB-UniRule"/>
</dbReference>
<dbReference type="GO" id="GO:0006412">
    <property type="term" value="P:translation"/>
    <property type="evidence" value="ECO:0007669"/>
    <property type="project" value="InterPro"/>
</dbReference>
<dbReference type="CDD" id="cd07026">
    <property type="entry name" value="Ribosomal_L20"/>
    <property type="match status" value="1"/>
</dbReference>
<dbReference type="FunFam" id="1.10.1900.20:FF:000001">
    <property type="entry name" value="50S ribosomal protein L20"/>
    <property type="match status" value="1"/>
</dbReference>
<dbReference type="Gene3D" id="6.10.160.10">
    <property type="match status" value="1"/>
</dbReference>
<dbReference type="Gene3D" id="1.10.1900.20">
    <property type="entry name" value="Ribosomal protein L20"/>
    <property type="match status" value="1"/>
</dbReference>
<dbReference type="HAMAP" id="MF_00382">
    <property type="entry name" value="Ribosomal_bL20"/>
    <property type="match status" value="1"/>
</dbReference>
<dbReference type="InterPro" id="IPR005813">
    <property type="entry name" value="Ribosomal_bL20"/>
</dbReference>
<dbReference type="InterPro" id="IPR049946">
    <property type="entry name" value="RIBOSOMAL_L20_CS"/>
</dbReference>
<dbReference type="InterPro" id="IPR035566">
    <property type="entry name" value="Ribosomal_protein_bL20_C"/>
</dbReference>
<dbReference type="NCBIfam" id="TIGR01032">
    <property type="entry name" value="rplT_bact"/>
    <property type="match status" value="1"/>
</dbReference>
<dbReference type="PANTHER" id="PTHR10986">
    <property type="entry name" value="39S RIBOSOMAL PROTEIN L20"/>
    <property type="match status" value="1"/>
</dbReference>
<dbReference type="Pfam" id="PF00453">
    <property type="entry name" value="Ribosomal_L20"/>
    <property type="match status" value="1"/>
</dbReference>
<dbReference type="PRINTS" id="PR00062">
    <property type="entry name" value="RIBOSOMALL20"/>
</dbReference>
<dbReference type="SUPFAM" id="SSF74731">
    <property type="entry name" value="Ribosomal protein L20"/>
    <property type="match status" value="1"/>
</dbReference>
<dbReference type="PROSITE" id="PS00937">
    <property type="entry name" value="RIBOSOMAL_L20"/>
    <property type="match status" value="1"/>
</dbReference>
<name>RL20_SALPC</name>
<gene>
    <name evidence="1" type="primary">rplT</name>
    <name type="ordered locus">SPC_2396</name>
</gene>
<feature type="chain" id="PRO_1000193975" description="Large ribosomal subunit protein bL20">
    <location>
        <begin position="1"/>
        <end position="118"/>
    </location>
</feature>